<name>METK_LACP7</name>
<proteinExistence type="inferred from homology"/>
<keyword id="KW-0067">ATP-binding</keyword>
<keyword id="KW-0963">Cytoplasm</keyword>
<keyword id="KW-0460">Magnesium</keyword>
<keyword id="KW-0479">Metal-binding</keyword>
<keyword id="KW-0547">Nucleotide-binding</keyword>
<keyword id="KW-0554">One-carbon metabolism</keyword>
<keyword id="KW-0630">Potassium</keyword>
<keyword id="KW-1185">Reference proteome</keyword>
<keyword id="KW-0808">Transferase</keyword>
<reference key="1">
    <citation type="submission" date="2007-11" db="EMBL/GenBank/DDBJ databases">
        <title>Complete genome sequence of Clostridium phytofermentans ISDg.</title>
        <authorList>
            <person name="Leschine S.B."/>
            <person name="Warnick T.A."/>
            <person name="Blanchard J.L."/>
            <person name="Schnell D.J."/>
            <person name="Petit E.L."/>
            <person name="LaTouf W.G."/>
            <person name="Copeland A."/>
            <person name="Lucas S."/>
            <person name="Lapidus A."/>
            <person name="Barry K."/>
            <person name="Glavina del Rio T."/>
            <person name="Dalin E."/>
            <person name="Tice H."/>
            <person name="Pitluck S."/>
            <person name="Kiss H."/>
            <person name="Brettin T."/>
            <person name="Bruce D."/>
            <person name="Detter J.C."/>
            <person name="Han C."/>
            <person name="Kuske C."/>
            <person name="Schmutz J."/>
            <person name="Larimer F."/>
            <person name="Land M."/>
            <person name="Hauser L."/>
            <person name="Kyrpides N."/>
            <person name="Kim E.A."/>
            <person name="Richardson P."/>
        </authorList>
    </citation>
    <scope>NUCLEOTIDE SEQUENCE [LARGE SCALE GENOMIC DNA]</scope>
    <source>
        <strain>ATCC 700394 / DSM 18823 / ISDg</strain>
    </source>
</reference>
<evidence type="ECO:0000255" key="1">
    <source>
        <dbReference type="HAMAP-Rule" id="MF_00086"/>
    </source>
</evidence>
<dbReference type="EC" id="2.5.1.6" evidence="1"/>
<dbReference type="EMBL" id="CP000885">
    <property type="protein sequence ID" value="ABX44221.1"/>
    <property type="molecule type" value="Genomic_DNA"/>
</dbReference>
<dbReference type="RefSeq" id="WP_012201868.1">
    <property type="nucleotide sequence ID" value="NC_010001.1"/>
</dbReference>
<dbReference type="SMR" id="A9KL72"/>
<dbReference type="STRING" id="357809.Cphy_3874"/>
<dbReference type="KEGG" id="cpy:Cphy_3874"/>
<dbReference type="eggNOG" id="COG0192">
    <property type="taxonomic scope" value="Bacteria"/>
</dbReference>
<dbReference type="HOGENOM" id="CLU_041802_1_1_9"/>
<dbReference type="OrthoDB" id="9801686at2"/>
<dbReference type="UniPathway" id="UPA00315">
    <property type="reaction ID" value="UER00080"/>
</dbReference>
<dbReference type="Proteomes" id="UP000000370">
    <property type="component" value="Chromosome"/>
</dbReference>
<dbReference type="GO" id="GO:0005737">
    <property type="term" value="C:cytoplasm"/>
    <property type="evidence" value="ECO:0007669"/>
    <property type="project" value="UniProtKB-SubCell"/>
</dbReference>
<dbReference type="GO" id="GO:0005524">
    <property type="term" value="F:ATP binding"/>
    <property type="evidence" value="ECO:0007669"/>
    <property type="project" value="UniProtKB-UniRule"/>
</dbReference>
<dbReference type="GO" id="GO:0000287">
    <property type="term" value="F:magnesium ion binding"/>
    <property type="evidence" value="ECO:0007669"/>
    <property type="project" value="UniProtKB-UniRule"/>
</dbReference>
<dbReference type="GO" id="GO:0004478">
    <property type="term" value="F:methionine adenosyltransferase activity"/>
    <property type="evidence" value="ECO:0007669"/>
    <property type="project" value="UniProtKB-UniRule"/>
</dbReference>
<dbReference type="GO" id="GO:0006730">
    <property type="term" value="P:one-carbon metabolic process"/>
    <property type="evidence" value="ECO:0007669"/>
    <property type="project" value="UniProtKB-KW"/>
</dbReference>
<dbReference type="GO" id="GO:0006556">
    <property type="term" value="P:S-adenosylmethionine biosynthetic process"/>
    <property type="evidence" value="ECO:0007669"/>
    <property type="project" value="UniProtKB-UniRule"/>
</dbReference>
<dbReference type="CDD" id="cd18079">
    <property type="entry name" value="S-AdoMet_synt"/>
    <property type="match status" value="1"/>
</dbReference>
<dbReference type="FunFam" id="3.30.300.10:FF:000003">
    <property type="entry name" value="S-adenosylmethionine synthase"/>
    <property type="match status" value="1"/>
</dbReference>
<dbReference type="FunFam" id="3.30.300.10:FF:000004">
    <property type="entry name" value="S-adenosylmethionine synthase"/>
    <property type="match status" value="1"/>
</dbReference>
<dbReference type="Gene3D" id="3.30.300.10">
    <property type="match status" value="3"/>
</dbReference>
<dbReference type="HAMAP" id="MF_00086">
    <property type="entry name" value="S_AdoMet_synth1"/>
    <property type="match status" value="1"/>
</dbReference>
<dbReference type="InterPro" id="IPR022631">
    <property type="entry name" value="ADOMET_SYNTHASE_CS"/>
</dbReference>
<dbReference type="InterPro" id="IPR022630">
    <property type="entry name" value="S-AdoMet_synt_C"/>
</dbReference>
<dbReference type="InterPro" id="IPR022629">
    <property type="entry name" value="S-AdoMet_synt_central"/>
</dbReference>
<dbReference type="InterPro" id="IPR022628">
    <property type="entry name" value="S-AdoMet_synt_N"/>
</dbReference>
<dbReference type="InterPro" id="IPR002133">
    <property type="entry name" value="S-AdoMet_synthetase"/>
</dbReference>
<dbReference type="InterPro" id="IPR022636">
    <property type="entry name" value="S-AdoMet_synthetase_sfam"/>
</dbReference>
<dbReference type="NCBIfam" id="TIGR01034">
    <property type="entry name" value="metK"/>
    <property type="match status" value="1"/>
</dbReference>
<dbReference type="PANTHER" id="PTHR11964">
    <property type="entry name" value="S-ADENOSYLMETHIONINE SYNTHETASE"/>
    <property type="match status" value="1"/>
</dbReference>
<dbReference type="Pfam" id="PF02773">
    <property type="entry name" value="S-AdoMet_synt_C"/>
    <property type="match status" value="1"/>
</dbReference>
<dbReference type="Pfam" id="PF02772">
    <property type="entry name" value="S-AdoMet_synt_M"/>
    <property type="match status" value="1"/>
</dbReference>
<dbReference type="Pfam" id="PF00438">
    <property type="entry name" value="S-AdoMet_synt_N"/>
    <property type="match status" value="1"/>
</dbReference>
<dbReference type="PIRSF" id="PIRSF000497">
    <property type="entry name" value="MAT"/>
    <property type="match status" value="1"/>
</dbReference>
<dbReference type="SUPFAM" id="SSF55973">
    <property type="entry name" value="S-adenosylmethionine synthetase"/>
    <property type="match status" value="3"/>
</dbReference>
<dbReference type="PROSITE" id="PS00376">
    <property type="entry name" value="ADOMET_SYNTHASE_1"/>
    <property type="match status" value="1"/>
</dbReference>
<dbReference type="PROSITE" id="PS00377">
    <property type="entry name" value="ADOMET_SYNTHASE_2"/>
    <property type="match status" value="1"/>
</dbReference>
<gene>
    <name evidence="1" type="primary">metK</name>
    <name type="ordered locus">Cphy_3874</name>
</gene>
<feature type="chain" id="PRO_1000075369" description="S-adenosylmethionine synthase">
    <location>
        <begin position="1"/>
        <end position="396"/>
    </location>
</feature>
<feature type="region of interest" description="Flexible loop" evidence="1">
    <location>
        <begin position="100"/>
        <end position="110"/>
    </location>
</feature>
<feature type="binding site" description="in other chain" evidence="1">
    <location>
        <position position="16"/>
    </location>
    <ligand>
        <name>ATP</name>
        <dbReference type="ChEBI" id="CHEBI:30616"/>
        <note>ligand shared between two neighboring subunits</note>
    </ligand>
</feature>
<feature type="binding site" evidence="1">
    <location>
        <position position="18"/>
    </location>
    <ligand>
        <name>Mg(2+)</name>
        <dbReference type="ChEBI" id="CHEBI:18420"/>
    </ligand>
</feature>
<feature type="binding site" evidence="1">
    <location>
        <position position="44"/>
    </location>
    <ligand>
        <name>K(+)</name>
        <dbReference type="ChEBI" id="CHEBI:29103"/>
    </ligand>
</feature>
<feature type="binding site" description="in other chain" evidence="1">
    <location>
        <position position="57"/>
    </location>
    <ligand>
        <name>L-methionine</name>
        <dbReference type="ChEBI" id="CHEBI:57844"/>
        <note>ligand shared between two neighboring subunits</note>
    </ligand>
</feature>
<feature type="binding site" description="in other chain" evidence="1">
    <location>
        <position position="100"/>
    </location>
    <ligand>
        <name>L-methionine</name>
        <dbReference type="ChEBI" id="CHEBI:57844"/>
        <note>ligand shared between two neighboring subunits</note>
    </ligand>
</feature>
<feature type="binding site" description="in other chain" evidence="1">
    <location>
        <begin position="176"/>
        <end position="178"/>
    </location>
    <ligand>
        <name>ATP</name>
        <dbReference type="ChEBI" id="CHEBI:30616"/>
        <note>ligand shared between two neighboring subunits</note>
    </ligand>
</feature>
<feature type="binding site" description="in other chain" evidence="1">
    <location>
        <begin position="243"/>
        <end position="244"/>
    </location>
    <ligand>
        <name>ATP</name>
        <dbReference type="ChEBI" id="CHEBI:30616"/>
        <note>ligand shared between two neighboring subunits</note>
    </ligand>
</feature>
<feature type="binding site" evidence="1">
    <location>
        <position position="252"/>
    </location>
    <ligand>
        <name>ATP</name>
        <dbReference type="ChEBI" id="CHEBI:30616"/>
        <note>ligand shared between two neighboring subunits</note>
    </ligand>
</feature>
<feature type="binding site" evidence="1">
    <location>
        <position position="252"/>
    </location>
    <ligand>
        <name>L-methionine</name>
        <dbReference type="ChEBI" id="CHEBI:57844"/>
        <note>ligand shared between two neighboring subunits</note>
    </ligand>
</feature>
<feature type="binding site" description="in other chain" evidence="1">
    <location>
        <begin position="258"/>
        <end position="259"/>
    </location>
    <ligand>
        <name>ATP</name>
        <dbReference type="ChEBI" id="CHEBI:30616"/>
        <note>ligand shared between two neighboring subunits</note>
    </ligand>
</feature>
<feature type="binding site" evidence="1">
    <location>
        <position position="275"/>
    </location>
    <ligand>
        <name>ATP</name>
        <dbReference type="ChEBI" id="CHEBI:30616"/>
        <note>ligand shared between two neighboring subunits</note>
    </ligand>
</feature>
<feature type="binding site" evidence="1">
    <location>
        <position position="279"/>
    </location>
    <ligand>
        <name>ATP</name>
        <dbReference type="ChEBI" id="CHEBI:30616"/>
        <note>ligand shared between two neighboring subunits</note>
    </ligand>
</feature>
<feature type="binding site" description="in other chain" evidence="1">
    <location>
        <position position="283"/>
    </location>
    <ligand>
        <name>L-methionine</name>
        <dbReference type="ChEBI" id="CHEBI:57844"/>
        <note>ligand shared between two neighboring subunits</note>
    </ligand>
</feature>
<organism>
    <name type="scientific">Lachnoclostridium phytofermentans (strain ATCC 700394 / DSM 18823 / ISDg)</name>
    <name type="common">Clostridium phytofermentans</name>
    <dbReference type="NCBI Taxonomy" id="357809"/>
    <lineage>
        <taxon>Bacteria</taxon>
        <taxon>Bacillati</taxon>
        <taxon>Bacillota</taxon>
        <taxon>Clostridia</taxon>
        <taxon>Lachnospirales</taxon>
        <taxon>Lachnospiraceae</taxon>
    </lineage>
</organism>
<comment type="function">
    <text evidence="1">Catalyzes the formation of S-adenosylmethionine (AdoMet) from methionine and ATP. The overall synthetic reaction is composed of two sequential steps, AdoMet formation and the subsequent tripolyphosphate hydrolysis which occurs prior to release of AdoMet from the enzyme.</text>
</comment>
<comment type="catalytic activity">
    <reaction evidence="1">
        <text>L-methionine + ATP + H2O = S-adenosyl-L-methionine + phosphate + diphosphate</text>
        <dbReference type="Rhea" id="RHEA:21080"/>
        <dbReference type="ChEBI" id="CHEBI:15377"/>
        <dbReference type="ChEBI" id="CHEBI:30616"/>
        <dbReference type="ChEBI" id="CHEBI:33019"/>
        <dbReference type="ChEBI" id="CHEBI:43474"/>
        <dbReference type="ChEBI" id="CHEBI:57844"/>
        <dbReference type="ChEBI" id="CHEBI:59789"/>
        <dbReference type="EC" id="2.5.1.6"/>
    </reaction>
</comment>
<comment type="cofactor">
    <cofactor evidence="1">
        <name>Mg(2+)</name>
        <dbReference type="ChEBI" id="CHEBI:18420"/>
    </cofactor>
    <text evidence="1">Binds 2 divalent ions per subunit.</text>
</comment>
<comment type="cofactor">
    <cofactor evidence="1">
        <name>K(+)</name>
        <dbReference type="ChEBI" id="CHEBI:29103"/>
    </cofactor>
    <text evidence="1">Binds 1 potassium ion per subunit.</text>
</comment>
<comment type="pathway">
    <text evidence="1">Amino-acid biosynthesis; S-adenosyl-L-methionine biosynthesis; S-adenosyl-L-methionine from L-methionine: step 1/1.</text>
</comment>
<comment type="subunit">
    <text evidence="1">Homotetramer; dimer of dimers.</text>
</comment>
<comment type="subcellular location">
    <subcellularLocation>
        <location evidence="1">Cytoplasm</location>
    </subcellularLocation>
</comment>
<comment type="similarity">
    <text evidence="1">Belongs to the AdoMet synthase family.</text>
</comment>
<protein>
    <recommendedName>
        <fullName evidence="1">S-adenosylmethionine synthase</fullName>
        <shortName evidence="1">AdoMet synthase</shortName>
        <ecNumber evidence="1">2.5.1.6</ecNumber>
    </recommendedName>
    <alternativeName>
        <fullName evidence="1">MAT</fullName>
    </alternativeName>
    <alternativeName>
        <fullName evidence="1">Methionine adenosyltransferase</fullName>
    </alternativeName>
</protein>
<accession>A9KL72</accession>
<sequence length="396" mass="43647">MQNKLLFTSESVTEGHPDKICDQISDAVLDALLEQDPMSRVACETAITTGLVLVMGEITTSGYVDIQKIVRDTVKEIGYDRAKYGFDADTCGVIVALDEQSKDIALGVDKALEAKQNEMTDEAIEAIGAGDQGMMFGYASNETEELMPYPISLAHKLTKQLSKVRKDGTLSYLRPDGKSQVTVEYNEEGKPVHLNAVVLSTQHDPDVTQEQIHEDIKKYVFEPVLPKEMVDEKTKFFINPTGRFVIGGPNGDSGLTGRKIIVDTYGGYARHGGGAFSGKDCTKVDRSASYAARYVAKNIVASGLADKCEIQLSYAIGVAQPTSIMIDTFGTGKKSNEELTEIVRKHFDLRPAGIIKMLDLRRPIYKQTAAYGHFGRNDLNLPWEQTDKAEELKKYL</sequence>